<sequence>MAPRKGKVQKEEVQVQLGPQVLDGEKVFAVCHIYASYNDTFVHVTDLSGRETIVRITGGQKVKADRDESSPYAAMLAAQDVAEKCKSLGINCLHIKIRATGGNKTKTPGPGGQSALRALARAGMKIGRIEDVTPVPSDSTRRKGGRRGRRL</sequence>
<reference key="1">
    <citation type="submission" date="1993-12" db="EMBL/GenBank/DDBJ databases">
        <authorList>
            <person name="Kang W."/>
            <person name="Naya Y."/>
        </authorList>
    </citation>
    <scope>NUCLEOTIDE SEQUENCE [MRNA]</scope>
</reference>
<evidence type="ECO:0000256" key="1">
    <source>
        <dbReference type="SAM" id="MobiDB-lite"/>
    </source>
</evidence>
<evidence type="ECO:0000305" key="2"/>
<organism>
    <name type="scientific">Procambarus clarkii</name>
    <name type="common">Red swamp crayfish</name>
    <dbReference type="NCBI Taxonomy" id="6728"/>
    <lineage>
        <taxon>Eukaryota</taxon>
        <taxon>Metazoa</taxon>
        <taxon>Ecdysozoa</taxon>
        <taxon>Arthropoda</taxon>
        <taxon>Crustacea</taxon>
        <taxon>Multicrustacea</taxon>
        <taxon>Malacostraca</taxon>
        <taxon>Eumalacostraca</taxon>
        <taxon>Eucarida</taxon>
        <taxon>Decapoda</taxon>
        <taxon>Pleocyemata</taxon>
        <taxon>Astacidea</taxon>
        <taxon>Astacoidea</taxon>
        <taxon>Cambaridae</taxon>
        <taxon>Procambarus</taxon>
    </lineage>
</organism>
<protein>
    <recommendedName>
        <fullName evidence="2">Small ribosomal subunit protein uS11</fullName>
    </recommendedName>
    <alternativeName>
        <fullName>40S ribosomal protein S14</fullName>
    </alternativeName>
</protein>
<keyword id="KW-0687">Ribonucleoprotein</keyword>
<keyword id="KW-0689">Ribosomal protein</keyword>
<name>RS14_PROCL</name>
<accession>P48855</accession>
<dbReference type="EMBL" id="D14609">
    <property type="protein sequence ID" value="BAA03461.1"/>
    <property type="molecule type" value="mRNA"/>
</dbReference>
<dbReference type="SMR" id="P48855"/>
<dbReference type="EnsemblMetazoa" id="XM_045745510.1">
    <property type="protein sequence ID" value="XP_045601466.1"/>
    <property type="gene ID" value="LOC123760070"/>
</dbReference>
<dbReference type="OrthoDB" id="1677536at2759"/>
<dbReference type="GO" id="GO:1990904">
    <property type="term" value="C:ribonucleoprotein complex"/>
    <property type="evidence" value="ECO:0007669"/>
    <property type="project" value="UniProtKB-KW"/>
</dbReference>
<dbReference type="GO" id="GO:0005840">
    <property type="term" value="C:ribosome"/>
    <property type="evidence" value="ECO:0007669"/>
    <property type="project" value="UniProtKB-KW"/>
</dbReference>
<dbReference type="GO" id="GO:0003735">
    <property type="term" value="F:structural constituent of ribosome"/>
    <property type="evidence" value="ECO:0007669"/>
    <property type="project" value="InterPro"/>
</dbReference>
<dbReference type="GO" id="GO:0006412">
    <property type="term" value="P:translation"/>
    <property type="evidence" value="ECO:0007669"/>
    <property type="project" value="InterPro"/>
</dbReference>
<dbReference type="FunFam" id="3.30.420.80:FF:000002">
    <property type="entry name" value="40S ribosomal protein S14"/>
    <property type="match status" value="1"/>
</dbReference>
<dbReference type="Gene3D" id="3.30.420.80">
    <property type="entry name" value="Ribosomal protein S11"/>
    <property type="match status" value="1"/>
</dbReference>
<dbReference type="HAMAP" id="MF_01310">
    <property type="entry name" value="Ribosomal_uS11"/>
    <property type="match status" value="1"/>
</dbReference>
<dbReference type="InterPro" id="IPR001971">
    <property type="entry name" value="Ribosomal_uS11"/>
</dbReference>
<dbReference type="InterPro" id="IPR018102">
    <property type="entry name" value="Ribosomal_uS11_CS"/>
</dbReference>
<dbReference type="InterPro" id="IPR036967">
    <property type="entry name" value="Ribosomal_uS11_sf"/>
</dbReference>
<dbReference type="NCBIfam" id="NF007176">
    <property type="entry name" value="PRK09607.1"/>
    <property type="match status" value="1"/>
</dbReference>
<dbReference type="PANTHER" id="PTHR11759">
    <property type="entry name" value="40S RIBOSOMAL PROTEIN S14/30S RIBOSOMAL PROTEIN S11"/>
    <property type="match status" value="1"/>
</dbReference>
<dbReference type="Pfam" id="PF00411">
    <property type="entry name" value="Ribosomal_S11"/>
    <property type="match status" value="1"/>
</dbReference>
<dbReference type="PIRSF" id="PIRSF002131">
    <property type="entry name" value="Ribosomal_S11"/>
    <property type="match status" value="1"/>
</dbReference>
<dbReference type="SUPFAM" id="SSF53137">
    <property type="entry name" value="Translational machinery components"/>
    <property type="match status" value="1"/>
</dbReference>
<dbReference type="PROSITE" id="PS00054">
    <property type="entry name" value="RIBOSOMAL_S11"/>
    <property type="match status" value="1"/>
</dbReference>
<proteinExistence type="evidence at transcript level"/>
<comment type="similarity">
    <text evidence="2">Belongs to the universal ribosomal protein uS11 family.</text>
</comment>
<feature type="chain" id="PRO_0000123343" description="Small ribosomal subunit protein uS11">
    <location>
        <begin position="1"/>
        <end position="151"/>
    </location>
</feature>
<feature type="region of interest" description="Disordered" evidence="1">
    <location>
        <begin position="129"/>
        <end position="151"/>
    </location>
</feature>
<feature type="compositionally biased region" description="Basic residues" evidence="1">
    <location>
        <begin position="142"/>
        <end position="151"/>
    </location>
</feature>
<gene>
    <name type="primary">RPS14</name>
</gene>